<comment type="function">
    <text evidence="1">Catalyzes the last two sequential reactions in the de novo biosynthetic pathway for UDP-N-acetylglucosamine (UDP-GlcNAc). The C-terminal domain catalyzes the transfer of acetyl group from acetyl coenzyme A to glucosamine-1-phosphate (GlcN-1-P) to produce N-acetylglucosamine-1-phosphate (GlcNAc-1-P), which is converted into UDP-GlcNAc by the transfer of uridine 5-monophosphate (from uridine 5-triphosphate), a reaction catalyzed by the N-terminal domain.</text>
</comment>
<comment type="catalytic activity">
    <reaction evidence="1">
        <text>alpha-D-glucosamine 1-phosphate + acetyl-CoA = N-acetyl-alpha-D-glucosamine 1-phosphate + CoA + H(+)</text>
        <dbReference type="Rhea" id="RHEA:13725"/>
        <dbReference type="ChEBI" id="CHEBI:15378"/>
        <dbReference type="ChEBI" id="CHEBI:57287"/>
        <dbReference type="ChEBI" id="CHEBI:57288"/>
        <dbReference type="ChEBI" id="CHEBI:57776"/>
        <dbReference type="ChEBI" id="CHEBI:58516"/>
        <dbReference type="EC" id="2.3.1.157"/>
    </reaction>
</comment>
<comment type="catalytic activity">
    <reaction evidence="1">
        <text>N-acetyl-alpha-D-glucosamine 1-phosphate + UTP + H(+) = UDP-N-acetyl-alpha-D-glucosamine + diphosphate</text>
        <dbReference type="Rhea" id="RHEA:13509"/>
        <dbReference type="ChEBI" id="CHEBI:15378"/>
        <dbReference type="ChEBI" id="CHEBI:33019"/>
        <dbReference type="ChEBI" id="CHEBI:46398"/>
        <dbReference type="ChEBI" id="CHEBI:57705"/>
        <dbReference type="ChEBI" id="CHEBI:57776"/>
        <dbReference type="EC" id="2.7.7.23"/>
    </reaction>
</comment>
<comment type="cofactor">
    <cofactor evidence="1">
        <name>Mg(2+)</name>
        <dbReference type="ChEBI" id="CHEBI:18420"/>
    </cofactor>
    <text evidence="1">Binds 1 Mg(2+) ion per subunit.</text>
</comment>
<comment type="pathway">
    <text evidence="1">Nucleotide-sugar biosynthesis; UDP-N-acetyl-alpha-D-glucosamine biosynthesis; N-acetyl-alpha-D-glucosamine 1-phosphate from alpha-D-glucosamine 6-phosphate (route II): step 2/2.</text>
</comment>
<comment type="pathway">
    <text evidence="1">Nucleotide-sugar biosynthesis; UDP-N-acetyl-alpha-D-glucosamine biosynthesis; UDP-N-acetyl-alpha-D-glucosamine from N-acetyl-alpha-D-glucosamine 1-phosphate: step 1/1.</text>
</comment>
<comment type="pathway">
    <text evidence="1">Bacterial outer membrane biogenesis; LPS lipid A biosynthesis.</text>
</comment>
<comment type="subunit">
    <text evidence="1">Homotrimer.</text>
</comment>
<comment type="subcellular location">
    <subcellularLocation>
        <location evidence="1">Cytoplasm</location>
    </subcellularLocation>
</comment>
<comment type="similarity">
    <text evidence="1">In the N-terminal section; belongs to the N-acetylglucosamine-1-phosphate uridyltransferase family.</text>
</comment>
<comment type="similarity">
    <text evidence="1">In the C-terminal section; belongs to the transferase hexapeptide repeat family.</text>
</comment>
<evidence type="ECO:0000255" key="1">
    <source>
        <dbReference type="HAMAP-Rule" id="MF_01631"/>
    </source>
</evidence>
<sequence length="451" mass="47462">MTARSSLTIVLAAGEGTRMRSHLPKVLHPVAHQTLLAHVLTAAPKGTGTSLAVVIGPDHQAVADEARRIRPDAVTFVQAERLGTAHAVLAAREAIARGVDDLLIAFGDTPLISAETFARLRAPLANGAALAALGFRAADPAGYGRFIVEGDRLVAIREQADASADERKIDLCNAGVMAIDGRRALAILDKIGNANSKGEYYLTDAVEIVREQGWESVVIETSEDEVRGINTKAQLAEAESVMQARLRKAAMEAGVTLIAPETVYLSADTVFGKDVTIEPFVVIGPGVSIADGTVIHSFSHIVETTLGRNVSIGPYARLRPGTSLGDGARIGNFVETKAATLEAGVKVNHLSYIGDATVGANSNIGAGTITCNYDGFKKHKTIIGQGAFVGTNSSLVAPVKIGNGAYIGSGSVITRDVPDDAMALERNQQTIREGGAARYREMKTRGKKPEK</sequence>
<keyword id="KW-0012">Acyltransferase</keyword>
<keyword id="KW-0133">Cell shape</keyword>
<keyword id="KW-0961">Cell wall biogenesis/degradation</keyword>
<keyword id="KW-0963">Cytoplasm</keyword>
<keyword id="KW-0460">Magnesium</keyword>
<keyword id="KW-0479">Metal-binding</keyword>
<keyword id="KW-0511">Multifunctional enzyme</keyword>
<keyword id="KW-0548">Nucleotidyltransferase</keyword>
<keyword id="KW-0573">Peptidoglycan synthesis</keyword>
<keyword id="KW-1185">Reference proteome</keyword>
<keyword id="KW-0677">Repeat</keyword>
<keyword id="KW-0808">Transferase</keyword>
<name>GLMU_BRADU</name>
<dbReference type="EC" id="2.7.7.23" evidence="1"/>
<dbReference type="EC" id="2.3.1.157" evidence="1"/>
<dbReference type="EMBL" id="BA000040">
    <property type="protein sequence ID" value="BAC49873.1"/>
    <property type="molecule type" value="Genomic_DNA"/>
</dbReference>
<dbReference type="RefSeq" id="NP_771248.1">
    <property type="nucleotide sequence ID" value="NC_004463.1"/>
</dbReference>
<dbReference type="RefSeq" id="WP_011087379.1">
    <property type="nucleotide sequence ID" value="NC_004463.1"/>
</dbReference>
<dbReference type="SMR" id="Q89LD7"/>
<dbReference type="FunCoup" id="Q89LD7">
    <property type="interactions" value="592"/>
</dbReference>
<dbReference type="STRING" id="224911.AAV28_20280"/>
<dbReference type="EnsemblBacteria" id="BAC49873">
    <property type="protein sequence ID" value="BAC49873"/>
    <property type="gene ID" value="BAC49873"/>
</dbReference>
<dbReference type="GeneID" id="46491619"/>
<dbReference type="KEGG" id="bja:bll4608"/>
<dbReference type="PATRIC" id="fig|224911.44.peg.4410"/>
<dbReference type="eggNOG" id="COG1207">
    <property type="taxonomic scope" value="Bacteria"/>
</dbReference>
<dbReference type="HOGENOM" id="CLU_029499_15_2_5"/>
<dbReference type="InParanoid" id="Q89LD7"/>
<dbReference type="OrthoDB" id="9775031at2"/>
<dbReference type="PhylomeDB" id="Q89LD7"/>
<dbReference type="UniPathway" id="UPA00113">
    <property type="reaction ID" value="UER00532"/>
</dbReference>
<dbReference type="UniPathway" id="UPA00113">
    <property type="reaction ID" value="UER00533"/>
</dbReference>
<dbReference type="UniPathway" id="UPA00973"/>
<dbReference type="Proteomes" id="UP000002526">
    <property type="component" value="Chromosome"/>
</dbReference>
<dbReference type="GO" id="GO:0005737">
    <property type="term" value="C:cytoplasm"/>
    <property type="evidence" value="ECO:0007669"/>
    <property type="project" value="UniProtKB-SubCell"/>
</dbReference>
<dbReference type="GO" id="GO:0016020">
    <property type="term" value="C:membrane"/>
    <property type="evidence" value="ECO:0007669"/>
    <property type="project" value="GOC"/>
</dbReference>
<dbReference type="GO" id="GO:0019134">
    <property type="term" value="F:glucosamine-1-phosphate N-acetyltransferase activity"/>
    <property type="evidence" value="ECO:0007669"/>
    <property type="project" value="UniProtKB-UniRule"/>
</dbReference>
<dbReference type="GO" id="GO:0000287">
    <property type="term" value="F:magnesium ion binding"/>
    <property type="evidence" value="ECO:0007669"/>
    <property type="project" value="UniProtKB-UniRule"/>
</dbReference>
<dbReference type="GO" id="GO:0003977">
    <property type="term" value="F:UDP-N-acetylglucosamine diphosphorylase activity"/>
    <property type="evidence" value="ECO:0007669"/>
    <property type="project" value="UniProtKB-UniRule"/>
</dbReference>
<dbReference type="GO" id="GO:0000902">
    <property type="term" value="P:cell morphogenesis"/>
    <property type="evidence" value="ECO:0007669"/>
    <property type="project" value="UniProtKB-UniRule"/>
</dbReference>
<dbReference type="GO" id="GO:0071555">
    <property type="term" value="P:cell wall organization"/>
    <property type="evidence" value="ECO:0007669"/>
    <property type="project" value="UniProtKB-KW"/>
</dbReference>
<dbReference type="GO" id="GO:0009245">
    <property type="term" value="P:lipid A biosynthetic process"/>
    <property type="evidence" value="ECO:0007669"/>
    <property type="project" value="UniProtKB-UniRule"/>
</dbReference>
<dbReference type="GO" id="GO:0009252">
    <property type="term" value="P:peptidoglycan biosynthetic process"/>
    <property type="evidence" value="ECO:0007669"/>
    <property type="project" value="UniProtKB-UniRule"/>
</dbReference>
<dbReference type="GO" id="GO:0008360">
    <property type="term" value="P:regulation of cell shape"/>
    <property type="evidence" value="ECO:0007669"/>
    <property type="project" value="UniProtKB-KW"/>
</dbReference>
<dbReference type="GO" id="GO:0006048">
    <property type="term" value="P:UDP-N-acetylglucosamine biosynthetic process"/>
    <property type="evidence" value="ECO:0007669"/>
    <property type="project" value="UniProtKB-UniPathway"/>
</dbReference>
<dbReference type="CDD" id="cd02540">
    <property type="entry name" value="GT2_GlmU_N_bac"/>
    <property type="match status" value="1"/>
</dbReference>
<dbReference type="CDD" id="cd03353">
    <property type="entry name" value="LbH_GlmU_C"/>
    <property type="match status" value="1"/>
</dbReference>
<dbReference type="Gene3D" id="2.160.10.10">
    <property type="entry name" value="Hexapeptide repeat proteins"/>
    <property type="match status" value="1"/>
</dbReference>
<dbReference type="Gene3D" id="3.90.550.10">
    <property type="entry name" value="Spore Coat Polysaccharide Biosynthesis Protein SpsA, Chain A"/>
    <property type="match status" value="1"/>
</dbReference>
<dbReference type="HAMAP" id="MF_01631">
    <property type="entry name" value="GlmU"/>
    <property type="match status" value="1"/>
</dbReference>
<dbReference type="InterPro" id="IPR005882">
    <property type="entry name" value="Bifunctional_GlmU"/>
</dbReference>
<dbReference type="InterPro" id="IPR050065">
    <property type="entry name" value="GlmU-like"/>
</dbReference>
<dbReference type="InterPro" id="IPR038009">
    <property type="entry name" value="GlmU_C_LbH"/>
</dbReference>
<dbReference type="InterPro" id="IPR001451">
    <property type="entry name" value="Hexapep"/>
</dbReference>
<dbReference type="InterPro" id="IPR018357">
    <property type="entry name" value="Hexapep_transf_CS"/>
</dbReference>
<dbReference type="InterPro" id="IPR025877">
    <property type="entry name" value="MobA-like_NTP_Trfase"/>
</dbReference>
<dbReference type="InterPro" id="IPR029044">
    <property type="entry name" value="Nucleotide-diphossugar_trans"/>
</dbReference>
<dbReference type="InterPro" id="IPR011004">
    <property type="entry name" value="Trimer_LpxA-like_sf"/>
</dbReference>
<dbReference type="NCBIfam" id="TIGR01173">
    <property type="entry name" value="glmU"/>
    <property type="match status" value="1"/>
</dbReference>
<dbReference type="NCBIfam" id="NF010933">
    <property type="entry name" value="PRK14353.1"/>
    <property type="match status" value="1"/>
</dbReference>
<dbReference type="PANTHER" id="PTHR43584:SF3">
    <property type="entry name" value="BIFUNCTIONAL PROTEIN GLMU"/>
    <property type="match status" value="1"/>
</dbReference>
<dbReference type="PANTHER" id="PTHR43584">
    <property type="entry name" value="NUCLEOTIDYL TRANSFERASE"/>
    <property type="match status" value="1"/>
</dbReference>
<dbReference type="Pfam" id="PF00132">
    <property type="entry name" value="Hexapep"/>
    <property type="match status" value="3"/>
</dbReference>
<dbReference type="Pfam" id="PF12804">
    <property type="entry name" value="NTP_transf_3"/>
    <property type="match status" value="1"/>
</dbReference>
<dbReference type="SUPFAM" id="SSF53448">
    <property type="entry name" value="Nucleotide-diphospho-sugar transferases"/>
    <property type="match status" value="1"/>
</dbReference>
<dbReference type="SUPFAM" id="SSF51161">
    <property type="entry name" value="Trimeric LpxA-like enzymes"/>
    <property type="match status" value="1"/>
</dbReference>
<dbReference type="PROSITE" id="PS00101">
    <property type="entry name" value="HEXAPEP_TRANSFERASES"/>
    <property type="match status" value="1"/>
</dbReference>
<gene>
    <name evidence="1" type="primary">glmU</name>
    <name type="ordered locus">bll4608</name>
</gene>
<reference key="1">
    <citation type="journal article" date="2002" name="DNA Res.">
        <title>Complete genomic sequence of nitrogen-fixing symbiotic bacterium Bradyrhizobium japonicum USDA110.</title>
        <authorList>
            <person name="Kaneko T."/>
            <person name="Nakamura Y."/>
            <person name="Sato S."/>
            <person name="Minamisawa K."/>
            <person name="Uchiumi T."/>
            <person name="Sasamoto S."/>
            <person name="Watanabe A."/>
            <person name="Idesawa K."/>
            <person name="Iriguchi M."/>
            <person name="Kawashima K."/>
            <person name="Kohara M."/>
            <person name="Matsumoto M."/>
            <person name="Shimpo S."/>
            <person name="Tsuruoka H."/>
            <person name="Wada T."/>
            <person name="Yamada M."/>
            <person name="Tabata S."/>
        </authorList>
    </citation>
    <scope>NUCLEOTIDE SEQUENCE [LARGE SCALE GENOMIC DNA]</scope>
    <source>
        <strain>JCM 10833 / BCRC 13528 / IAM 13628 / NBRC 14792 / USDA 110</strain>
    </source>
</reference>
<feature type="chain" id="PRO_0000233743" description="Bifunctional protein GlmU">
    <location>
        <begin position="1"/>
        <end position="451"/>
    </location>
</feature>
<feature type="region of interest" description="Pyrophosphorylase" evidence="1">
    <location>
        <begin position="1"/>
        <end position="232"/>
    </location>
</feature>
<feature type="region of interest" description="Linker" evidence="1">
    <location>
        <begin position="233"/>
        <end position="253"/>
    </location>
</feature>
<feature type="region of interest" description="N-acetyltransferase" evidence="1">
    <location>
        <begin position="254"/>
        <end position="451"/>
    </location>
</feature>
<feature type="active site" description="Proton acceptor" evidence="1">
    <location>
        <position position="349"/>
    </location>
</feature>
<feature type="binding site" evidence="1">
    <location>
        <begin position="11"/>
        <end position="14"/>
    </location>
    <ligand>
        <name>UDP-N-acetyl-alpha-D-glucosamine</name>
        <dbReference type="ChEBI" id="CHEBI:57705"/>
    </ligand>
</feature>
<feature type="binding site" evidence="1">
    <location>
        <position position="25"/>
    </location>
    <ligand>
        <name>UDP-N-acetyl-alpha-D-glucosamine</name>
        <dbReference type="ChEBI" id="CHEBI:57705"/>
    </ligand>
</feature>
<feature type="binding site" evidence="1">
    <location>
        <position position="78"/>
    </location>
    <ligand>
        <name>UDP-N-acetyl-alpha-D-glucosamine</name>
        <dbReference type="ChEBI" id="CHEBI:57705"/>
    </ligand>
</feature>
<feature type="binding site" evidence="1">
    <location>
        <begin position="83"/>
        <end position="84"/>
    </location>
    <ligand>
        <name>UDP-N-acetyl-alpha-D-glucosamine</name>
        <dbReference type="ChEBI" id="CHEBI:57705"/>
    </ligand>
</feature>
<feature type="binding site" evidence="1">
    <location>
        <position position="108"/>
    </location>
    <ligand>
        <name>Mg(2+)</name>
        <dbReference type="ChEBI" id="CHEBI:18420"/>
    </ligand>
</feature>
<feature type="binding site" evidence="1">
    <location>
        <position position="144"/>
    </location>
    <ligand>
        <name>UDP-N-acetyl-alpha-D-glucosamine</name>
        <dbReference type="ChEBI" id="CHEBI:57705"/>
    </ligand>
</feature>
<feature type="binding site" evidence="1">
    <location>
        <position position="158"/>
    </location>
    <ligand>
        <name>UDP-N-acetyl-alpha-D-glucosamine</name>
        <dbReference type="ChEBI" id="CHEBI:57705"/>
    </ligand>
</feature>
<feature type="binding site" evidence="1">
    <location>
        <position position="173"/>
    </location>
    <ligand>
        <name>UDP-N-acetyl-alpha-D-glucosamine</name>
        <dbReference type="ChEBI" id="CHEBI:57705"/>
    </ligand>
</feature>
<feature type="binding site" evidence="1">
    <location>
        <position position="230"/>
    </location>
    <ligand>
        <name>Mg(2+)</name>
        <dbReference type="ChEBI" id="CHEBI:18420"/>
    </ligand>
</feature>
<feature type="binding site" evidence="1">
    <location>
        <position position="230"/>
    </location>
    <ligand>
        <name>UDP-N-acetyl-alpha-D-glucosamine</name>
        <dbReference type="ChEBI" id="CHEBI:57705"/>
    </ligand>
</feature>
<feature type="binding site" evidence="1">
    <location>
        <position position="319"/>
    </location>
    <ligand>
        <name>UDP-N-acetyl-alpha-D-glucosamine</name>
        <dbReference type="ChEBI" id="CHEBI:57705"/>
    </ligand>
</feature>
<feature type="binding site" evidence="1">
    <location>
        <position position="337"/>
    </location>
    <ligand>
        <name>UDP-N-acetyl-alpha-D-glucosamine</name>
        <dbReference type="ChEBI" id="CHEBI:57705"/>
    </ligand>
</feature>
<feature type="binding site" evidence="1">
    <location>
        <position position="352"/>
    </location>
    <ligand>
        <name>UDP-N-acetyl-alpha-D-glucosamine</name>
        <dbReference type="ChEBI" id="CHEBI:57705"/>
    </ligand>
</feature>
<feature type="binding site" evidence="1">
    <location>
        <position position="363"/>
    </location>
    <ligand>
        <name>UDP-N-acetyl-alpha-D-glucosamine</name>
        <dbReference type="ChEBI" id="CHEBI:57705"/>
    </ligand>
</feature>
<feature type="binding site" evidence="1">
    <location>
        <position position="366"/>
    </location>
    <ligand>
        <name>acetyl-CoA</name>
        <dbReference type="ChEBI" id="CHEBI:57288"/>
    </ligand>
</feature>
<feature type="binding site" evidence="1">
    <location>
        <begin position="372"/>
        <end position="373"/>
    </location>
    <ligand>
        <name>acetyl-CoA</name>
        <dbReference type="ChEBI" id="CHEBI:57288"/>
    </ligand>
</feature>
<feature type="binding site" evidence="1">
    <location>
        <position position="409"/>
    </location>
    <ligand>
        <name>acetyl-CoA</name>
        <dbReference type="ChEBI" id="CHEBI:57288"/>
    </ligand>
</feature>
<feature type="binding site" evidence="1">
    <location>
        <position position="426"/>
    </location>
    <ligand>
        <name>acetyl-CoA</name>
        <dbReference type="ChEBI" id="CHEBI:57288"/>
    </ligand>
</feature>
<proteinExistence type="inferred from homology"/>
<accession>Q89LD7</accession>
<organism>
    <name type="scientific">Bradyrhizobium diazoefficiens (strain JCM 10833 / BCRC 13528 / IAM 13628 / NBRC 14792 / USDA 110)</name>
    <dbReference type="NCBI Taxonomy" id="224911"/>
    <lineage>
        <taxon>Bacteria</taxon>
        <taxon>Pseudomonadati</taxon>
        <taxon>Pseudomonadota</taxon>
        <taxon>Alphaproteobacteria</taxon>
        <taxon>Hyphomicrobiales</taxon>
        <taxon>Nitrobacteraceae</taxon>
        <taxon>Bradyrhizobium</taxon>
    </lineage>
</organism>
<protein>
    <recommendedName>
        <fullName evidence="1">Bifunctional protein GlmU</fullName>
    </recommendedName>
    <domain>
        <recommendedName>
            <fullName evidence="1">UDP-N-acetylglucosamine pyrophosphorylase</fullName>
            <ecNumber evidence="1">2.7.7.23</ecNumber>
        </recommendedName>
        <alternativeName>
            <fullName evidence="1">N-acetylglucosamine-1-phosphate uridyltransferase</fullName>
        </alternativeName>
    </domain>
    <domain>
        <recommendedName>
            <fullName evidence="1">Glucosamine-1-phosphate N-acetyltransferase</fullName>
            <ecNumber evidence="1">2.3.1.157</ecNumber>
        </recommendedName>
    </domain>
</protein>